<evidence type="ECO:0000255" key="1">
    <source>
        <dbReference type="HAMAP-Rule" id="MF_01615"/>
    </source>
</evidence>
<accession>A0Q5I2</accession>
<sequence>MTQKVGVLAIQGGYQKHADMFKSLGVEVKLVKFNNDFDSIDRLVIPGGESTTLLNLLNKHQIFDKLYNFCSSKPVFGTCAGSIVLSKGEGYLNLLDLEVQRNAYGRQVDSFVADISFNDKNITGVFIRAPKFIVVGNQVDILSKYQDSPVLLRQANILVSSFHPELTQDPTIHEYFLAM</sequence>
<name>PDXT_FRATN</name>
<protein>
    <recommendedName>
        <fullName evidence="1">Pyridoxal 5'-phosphate synthase subunit PdxT</fullName>
        <ecNumber evidence="1">4.3.3.6</ecNumber>
    </recommendedName>
    <alternativeName>
        <fullName evidence="1">Pdx2</fullName>
    </alternativeName>
    <alternativeName>
        <fullName evidence="1">Pyridoxal 5'-phosphate synthase glutaminase subunit</fullName>
        <ecNumber evidence="1">3.5.1.2</ecNumber>
    </alternativeName>
</protein>
<feature type="chain" id="PRO_0000292998" description="Pyridoxal 5'-phosphate synthase subunit PdxT">
    <location>
        <begin position="1"/>
        <end position="179"/>
    </location>
</feature>
<feature type="active site" description="Nucleophile" evidence="1">
    <location>
        <position position="79"/>
    </location>
</feature>
<feature type="active site" description="Charge relay system" evidence="1">
    <location>
        <position position="163"/>
    </location>
</feature>
<feature type="active site" description="Charge relay system" evidence="1">
    <location>
        <position position="165"/>
    </location>
</feature>
<feature type="binding site" evidence="1">
    <location>
        <begin position="48"/>
        <end position="50"/>
    </location>
    <ligand>
        <name>L-glutamine</name>
        <dbReference type="ChEBI" id="CHEBI:58359"/>
    </ligand>
</feature>
<feature type="binding site" evidence="1">
    <location>
        <position position="101"/>
    </location>
    <ligand>
        <name>L-glutamine</name>
        <dbReference type="ChEBI" id="CHEBI:58359"/>
    </ligand>
</feature>
<feature type="binding site" evidence="1">
    <location>
        <begin position="127"/>
        <end position="128"/>
    </location>
    <ligand>
        <name>L-glutamine</name>
        <dbReference type="ChEBI" id="CHEBI:58359"/>
    </ligand>
</feature>
<proteinExistence type="inferred from homology"/>
<organism>
    <name type="scientific">Francisella tularensis subsp. novicida (strain U112)</name>
    <dbReference type="NCBI Taxonomy" id="401614"/>
    <lineage>
        <taxon>Bacteria</taxon>
        <taxon>Pseudomonadati</taxon>
        <taxon>Pseudomonadota</taxon>
        <taxon>Gammaproteobacteria</taxon>
        <taxon>Thiotrichales</taxon>
        <taxon>Francisellaceae</taxon>
        <taxon>Francisella</taxon>
    </lineage>
</organism>
<dbReference type="EC" id="4.3.3.6" evidence="1"/>
<dbReference type="EC" id="3.5.1.2" evidence="1"/>
<dbReference type="EMBL" id="CP000439">
    <property type="protein sequence ID" value="ABK89497.1"/>
    <property type="molecule type" value="Genomic_DNA"/>
</dbReference>
<dbReference type="RefSeq" id="WP_003038662.1">
    <property type="nucleotide sequence ID" value="NC_008601.1"/>
</dbReference>
<dbReference type="SMR" id="A0Q5I2"/>
<dbReference type="KEGG" id="ftn:FTN_0602"/>
<dbReference type="KEGG" id="ftx:AW25_1426"/>
<dbReference type="UniPathway" id="UPA00245"/>
<dbReference type="Proteomes" id="UP000000762">
    <property type="component" value="Chromosome"/>
</dbReference>
<dbReference type="GO" id="GO:0005829">
    <property type="term" value="C:cytosol"/>
    <property type="evidence" value="ECO:0007669"/>
    <property type="project" value="TreeGrafter"/>
</dbReference>
<dbReference type="GO" id="GO:1903600">
    <property type="term" value="C:glutaminase complex"/>
    <property type="evidence" value="ECO:0007669"/>
    <property type="project" value="TreeGrafter"/>
</dbReference>
<dbReference type="GO" id="GO:0004359">
    <property type="term" value="F:glutaminase activity"/>
    <property type="evidence" value="ECO:0007669"/>
    <property type="project" value="UniProtKB-UniRule"/>
</dbReference>
<dbReference type="GO" id="GO:0036381">
    <property type="term" value="F:pyridoxal 5'-phosphate synthase (glutamine hydrolysing) activity"/>
    <property type="evidence" value="ECO:0007669"/>
    <property type="project" value="UniProtKB-UniRule"/>
</dbReference>
<dbReference type="GO" id="GO:0006543">
    <property type="term" value="P:glutamine catabolic process"/>
    <property type="evidence" value="ECO:0007669"/>
    <property type="project" value="UniProtKB-UniRule"/>
</dbReference>
<dbReference type="GO" id="GO:0042823">
    <property type="term" value="P:pyridoxal phosphate biosynthetic process"/>
    <property type="evidence" value="ECO:0007669"/>
    <property type="project" value="UniProtKB-UniRule"/>
</dbReference>
<dbReference type="GO" id="GO:0008614">
    <property type="term" value="P:pyridoxine metabolic process"/>
    <property type="evidence" value="ECO:0007669"/>
    <property type="project" value="TreeGrafter"/>
</dbReference>
<dbReference type="CDD" id="cd01749">
    <property type="entry name" value="GATase1_PB"/>
    <property type="match status" value="1"/>
</dbReference>
<dbReference type="Gene3D" id="3.40.50.880">
    <property type="match status" value="1"/>
</dbReference>
<dbReference type="HAMAP" id="MF_01615">
    <property type="entry name" value="PdxT"/>
    <property type="match status" value="1"/>
</dbReference>
<dbReference type="InterPro" id="IPR029062">
    <property type="entry name" value="Class_I_gatase-like"/>
</dbReference>
<dbReference type="InterPro" id="IPR002161">
    <property type="entry name" value="PdxT/SNO"/>
</dbReference>
<dbReference type="InterPro" id="IPR021196">
    <property type="entry name" value="PdxT/SNO_CS"/>
</dbReference>
<dbReference type="NCBIfam" id="TIGR03800">
    <property type="entry name" value="PLP_synth_Pdx2"/>
    <property type="match status" value="1"/>
</dbReference>
<dbReference type="NCBIfam" id="NF010050">
    <property type="entry name" value="PRK13526.1"/>
    <property type="match status" value="1"/>
</dbReference>
<dbReference type="PANTHER" id="PTHR31559">
    <property type="entry name" value="PYRIDOXAL 5'-PHOSPHATE SYNTHASE SUBUNIT SNO"/>
    <property type="match status" value="1"/>
</dbReference>
<dbReference type="PANTHER" id="PTHR31559:SF0">
    <property type="entry name" value="PYRIDOXAL 5'-PHOSPHATE SYNTHASE SUBUNIT SNO1-RELATED"/>
    <property type="match status" value="1"/>
</dbReference>
<dbReference type="Pfam" id="PF01174">
    <property type="entry name" value="SNO"/>
    <property type="match status" value="1"/>
</dbReference>
<dbReference type="PIRSF" id="PIRSF005639">
    <property type="entry name" value="Glut_amidoT_SNO"/>
    <property type="match status" value="1"/>
</dbReference>
<dbReference type="SUPFAM" id="SSF52317">
    <property type="entry name" value="Class I glutamine amidotransferase-like"/>
    <property type="match status" value="1"/>
</dbReference>
<dbReference type="PROSITE" id="PS01236">
    <property type="entry name" value="PDXT_SNO_1"/>
    <property type="match status" value="1"/>
</dbReference>
<dbReference type="PROSITE" id="PS51130">
    <property type="entry name" value="PDXT_SNO_2"/>
    <property type="match status" value="1"/>
</dbReference>
<reference key="1">
    <citation type="journal article" date="2007" name="Genome Biol.">
        <title>Comparison of Francisella tularensis genomes reveals evolutionary events associated with the emergence of human pathogenic strains.</title>
        <authorList>
            <person name="Rohmer L."/>
            <person name="Fong C."/>
            <person name="Abmayr S."/>
            <person name="Wasnick M."/>
            <person name="Larson Freeman T.J."/>
            <person name="Radey M."/>
            <person name="Guina T."/>
            <person name="Svensson K."/>
            <person name="Hayden H.S."/>
            <person name="Jacobs M."/>
            <person name="Gallagher L.A."/>
            <person name="Manoil C."/>
            <person name="Ernst R.K."/>
            <person name="Drees B."/>
            <person name="Buckley D."/>
            <person name="Haugen E."/>
            <person name="Bovee D."/>
            <person name="Zhou Y."/>
            <person name="Chang J."/>
            <person name="Levy R."/>
            <person name="Lim R."/>
            <person name="Gillett W."/>
            <person name="Guenthener D."/>
            <person name="Kang A."/>
            <person name="Shaffer S.A."/>
            <person name="Taylor G."/>
            <person name="Chen J."/>
            <person name="Gallis B."/>
            <person name="D'Argenio D.A."/>
            <person name="Forsman M."/>
            <person name="Olson M.V."/>
            <person name="Goodlett D.R."/>
            <person name="Kaul R."/>
            <person name="Miller S.I."/>
            <person name="Brittnacher M.J."/>
        </authorList>
    </citation>
    <scope>NUCLEOTIDE SEQUENCE [LARGE SCALE GENOMIC DNA]</scope>
    <source>
        <strain>U112</strain>
    </source>
</reference>
<keyword id="KW-0315">Glutamine amidotransferase</keyword>
<keyword id="KW-0378">Hydrolase</keyword>
<keyword id="KW-0456">Lyase</keyword>
<keyword id="KW-0663">Pyridoxal phosphate</keyword>
<comment type="function">
    <text evidence="1">Catalyzes the hydrolysis of glutamine to glutamate and ammonia as part of the biosynthesis of pyridoxal 5'-phosphate. The resulting ammonia molecule is channeled to the active site of PdxS.</text>
</comment>
<comment type="catalytic activity">
    <reaction evidence="1">
        <text>aldehydo-D-ribose 5-phosphate + D-glyceraldehyde 3-phosphate + L-glutamine = pyridoxal 5'-phosphate + L-glutamate + phosphate + 3 H2O + H(+)</text>
        <dbReference type="Rhea" id="RHEA:31507"/>
        <dbReference type="ChEBI" id="CHEBI:15377"/>
        <dbReference type="ChEBI" id="CHEBI:15378"/>
        <dbReference type="ChEBI" id="CHEBI:29985"/>
        <dbReference type="ChEBI" id="CHEBI:43474"/>
        <dbReference type="ChEBI" id="CHEBI:58273"/>
        <dbReference type="ChEBI" id="CHEBI:58359"/>
        <dbReference type="ChEBI" id="CHEBI:59776"/>
        <dbReference type="ChEBI" id="CHEBI:597326"/>
        <dbReference type="EC" id="4.3.3.6"/>
    </reaction>
</comment>
<comment type="catalytic activity">
    <reaction evidence="1">
        <text>L-glutamine + H2O = L-glutamate + NH4(+)</text>
        <dbReference type="Rhea" id="RHEA:15889"/>
        <dbReference type="ChEBI" id="CHEBI:15377"/>
        <dbReference type="ChEBI" id="CHEBI:28938"/>
        <dbReference type="ChEBI" id="CHEBI:29985"/>
        <dbReference type="ChEBI" id="CHEBI:58359"/>
        <dbReference type="EC" id="3.5.1.2"/>
    </reaction>
</comment>
<comment type="pathway">
    <text evidence="1">Cofactor biosynthesis; pyridoxal 5'-phosphate biosynthesis.</text>
</comment>
<comment type="subunit">
    <text evidence="1">In the presence of PdxS, forms a dodecamer of heterodimers. Only shows activity in the heterodimer.</text>
</comment>
<comment type="similarity">
    <text evidence="1">Belongs to the glutaminase PdxT/SNO family.</text>
</comment>
<gene>
    <name evidence="1" type="primary">pdxT</name>
    <name type="ordered locus">FTN_0602</name>
</gene>